<accession>Q8L557</accession>
<accession>Q9FJJ7</accession>
<accession>Q9FJJ8</accession>
<feature type="initiator methionine" description="Removed" evidence="8">
    <location>
        <position position="1"/>
    </location>
</feature>
<feature type="chain" id="PRO_0000439874" description="Protein EMBRYO DEFECTIVE 514">
    <location>
        <begin position="2"/>
        <end position="202"/>
    </location>
</feature>
<feature type="region of interest" description="Disordered" evidence="1">
    <location>
        <begin position="1"/>
        <end position="69"/>
    </location>
</feature>
<feature type="region of interest" description="Disordered" evidence="1">
    <location>
        <begin position="168"/>
        <end position="202"/>
    </location>
</feature>
<feature type="compositionally biased region" description="Basic and acidic residues" evidence="1">
    <location>
        <begin position="33"/>
        <end position="42"/>
    </location>
</feature>
<feature type="compositionally biased region" description="Basic and acidic residues" evidence="1">
    <location>
        <begin position="51"/>
        <end position="65"/>
    </location>
</feature>
<feature type="compositionally biased region" description="Gly residues" evidence="1">
    <location>
        <begin position="174"/>
        <end position="202"/>
    </location>
</feature>
<feature type="modified residue" description="N-acetylalanine" evidence="8">
    <location>
        <position position="2"/>
    </location>
</feature>
<proteinExistence type="evidence at protein level"/>
<sequence>MAEEQEIVDSLSAEVNPDQKVDMEVETATPKAETGDEKREREETEEEENGGESKKQKVGEEEKSGPVKLGPKEFVTSVAMFDYFVKFLHFWPTDLDVNKYEHMVLLDLIKKGHSEPEKKIGGGIKTFQVRTHPMWKSRCFFLVREDDTADDFSFRKCVDQILPLPENMKTPGANGNGHGGGRGGGGGRRGGRGGGRGGRFRR</sequence>
<name>EM514_ARATH</name>
<evidence type="ECO:0000256" key="1">
    <source>
        <dbReference type="SAM" id="MobiDB-lite"/>
    </source>
</evidence>
<evidence type="ECO:0000269" key="2">
    <source>
    </source>
</evidence>
<evidence type="ECO:0000303" key="3">
    <source>
    </source>
</evidence>
<evidence type="ECO:0000305" key="4"/>
<evidence type="ECO:0000312" key="5">
    <source>
        <dbReference type="Araport" id="AT5G62440"/>
    </source>
</evidence>
<evidence type="ECO:0000312" key="6">
    <source>
        <dbReference type="EMBL" id="BAB11494.1"/>
    </source>
</evidence>
<evidence type="ECO:0000312" key="7">
    <source>
        <dbReference type="EMBL" id="BAB11495.1"/>
    </source>
</evidence>
<evidence type="ECO:0007744" key="8">
    <source>
    </source>
</evidence>
<keyword id="KW-0007">Acetylation</keyword>
<keyword id="KW-0539">Nucleus</keyword>
<keyword id="KW-1185">Reference proteome</keyword>
<protein>
    <recommendedName>
        <fullName evidence="3">Protein EMBRYO DEFECTIVE 514</fullName>
    </recommendedName>
    <alternativeName>
        <fullName evidence="3">Protein DOMINO 1</fullName>
    </alternativeName>
</protein>
<comment type="function">
    <text evidence="2">May play a role in ribosome biogenesis and in determining the rate of cell division. Involved in a process essential for nuclear and nucleolar functions.</text>
</comment>
<comment type="subcellular location">
    <subcellularLocation>
        <location evidence="2">Nucleus</location>
    </subcellularLocation>
    <text evidence="2">Does not localize in the nucleolus.</text>
</comment>
<comment type="tissue specificity">
    <text evidence="2">Expressed in leaves, flowers and embryos at globular stage.</text>
</comment>
<comment type="disruption phenotype">
    <text evidence="2">Embryonic lethality due to embryo development arrest at globular stage.</text>
</comment>
<comment type="sequence caution" evidence="4">
    <conflict type="erroneous gene model prediction">
        <sequence resource="EMBL-CDS" id="BAB11494"/>
    </conflict>
    <text>Was originally thought to correspond to two different genes.</text>
</comment>
<comment type="sequence caution" evidence="4">
    <conflict type="erroneous gene model prediction">
        <sequence resource="EMBL-CDS" id="BAB11495"/>
    </conflict>
    <text>Was originally thought to correspond to two different genes.</text>
</comment>
<reference key="1">
    <citation type="journal article" date="2004" name="Plant J.">
        <title>DOMINO1, a member of a small plant-specific gene family, encodes a protein essential for nuclear and nucleolar functions.</title>
        <authorList>
            <person name="Lahmy S."/>
            <person name="Guilleminot J."/>
            <person name="Cheng C.M."/>
            <person name="Bechtold N."/>
            <person name="Albert S."/>
            <person name="Pelletier G."/>
            <person name="Delseny M."/>
            <person name="Devic M."/>
        </authorList>
    </citation>
    <scope>NUCLEOTIDE SEQUENCE [MRNA]</scope>
    <scope>FUNCTION</scope>
    <scope>SUBCELLULAR LOCATION</scope>
    <scope>TISSUE SPECIFICITY</scope>
    <scope>DISRUPTION PHENOTYPE</scope>
</reference>
<reference key="2">
    <citation type="journal article" date="1998" name="DNA Res.">
        <title>Structural analysis of Arabidopsis thaliana chromosome 5. VII. Sequence features of the regions of 1,013,767 bp covered by sixteen physically assigned P1 and TAC clones.</title>
        <authorList>
            <person name="Nakamura Y."/>
            <person name="Sato S."/>
            <person name="Asamizu E."/>
            <person name="Kaneko T."/>
            <person name="Kotani H."/>
            <person name="Miyajima N."/>
            <person name="Tabata S."/>
        </authorList>
    </citation>
    <scope>NUCLEOTIDE SEQUENCE [LARGE SCALE GENOMIC DNA]</scope>
    <source>
        <strain>cv. Columbia</strain>
    </source>
</reference>
<reference key="3">
    <citation type="journal article" date="2017" name="Plant J.">
        <title>Araport11: a complete reannotation of the Arabidopsis thaliana reference genome.</title>
        <authorList>
            <person name="Cheng C.Y."/>
            <person name="Krishnakumar V."/>
            <person name="Chan A.P."/>
            <person name="Thibaud-Nissen F."/>
            <person name="Schobel S."/>
            <person name="Town C.D."/>
        </authorList>
    </citation>
    <scope>GENOME REANNOTATION</scope>
    <source>
        <strain>cv. Columbia</strain>
    </source>
</reference>
<reference key="4">
    <citation type="journal article" date="2003" name="Science">
        <title>Empirical analysis of transcriptional activity in the Arabidopsis genome.</title>
        <authorList>
            <person name="Yamada K."/>
            <person name="Lim J."/>
            <person name="Dale J.M."/>
            <person name="Chen H."/>
            <person name="Shinn P."/>
            <person name="Palm C.J."/>
            <person name="Southwick A.M."/>
            <person name="Wu H.C."/>
            <person name="Kim C.J."/>
            <person name="Nguyen M."/>
            <person name="Pham P.K."/>
            <person name="Cheuk R.F."/>
            <person name="Karlin-Newmann G."/>
            <person name="Liu S.X."/>
            <person name="Lam B."/>
            <person name="Sakano H."/>
            <person name="Wu T."/>
            <person name="Yu G."/>
            <person name="Miranda M."/>
            <person name="Quach H.L."/>
            <person name="Tripp M."/>
            <person name="Chang C.H."/>
            <person name="Lee J.M."/>
            <person name="Toriumi M.J."/>
            <person name="Chan M.M."/>
            <person name="Tang C.C."/>
            <person name="Onodera C.S."/>
            <person name="Deng J.M."/>
            <person name="Akiyama K."/>
            <person name="Ansari Y."/>
            <person name="Arakawa T."/>
            <person name="Banh J."/>
            <person name="Banno F."/>
            <person name="Bowser L."/>
            <person name="Brooks S.Y."/>
            <person name="Carninci P."/>
            <person name="Chao Q."/>
            <person name="Choy N."/>
            <person name="Enju A."/>
            <person name="Goldsmith A.D."/>
            <person name="Gurjal M."/>
            <person name="Hansen N.F."/>
            <person name="Hayashizaki Y."/>
            <person name="Johnson-Hopson C."/>
            <person name="Hsuan V.W."/>
            <person name="Iida K."/>
            <person name="Karnes M."/>
            <person name="Khan S."/>
            <person name="Koesema E."/>
            <person name="Ishida J."/>
            <person name="Jiang P.X."/>
            <person name="Jones T."/>
            <person name="Kawai J."/>
            <person name="Kamiya A."/>
            <person name="Meyers C."/>
            <person name="Nakajima M."/>
            <person name="Narusaka M."/>
            <person name="Seki M."/>
            <person name="Sakurai T."/>
            <person name="Satou M."/>
            <person name="Tamse R."/>
            <person name="Vaysberg M."/>
            <person name="Wallender E.K."/>
            <person name="Wong C."/>
            <person name="Yamamura Y."/>
            <person name="Yuan S."/>
            <person name="Shinozaki K."/>
            <person name="Davis R.W."/>
            <person name="Theologis A."/>
            <person name="Ecker J.R."/>
        </authorList>
    </citation>
    <scope>NUCLEOTIDE SEQUENCE [LARGE SCALE MRNA]</scope>
    <source>
        <strain>cv. Columbia</strain>
    </source>
</reference>
<reference key="5">
    <citation type="submission" date="2006-07" db="EMBL/GenBank/DDBJ databases">
        <title>Large-scale analysis of RIKEN Arabidopsis full-length (RAFL) cDNAs.</title>
        <authorList>
            <person name="Totoki Y."/>
            <person name="Seki M."/>
            <person name="Ishida J."/>
            <person name="Nakajima M."/>
            <person name="Enju A."/>
            <person name="Kamiya A."/>
            <person name="Narusaka M."/>
            <person name="Shin-i T."/>
            <person name="Nakagawa M."/>
            <person name="Sakamoto N."/>
            <person name="Oishi K."/>
            <person name="Kohara Y."/>
            <person name="Kobayashi M."/>
            <person name="Toyoda A."/>
            <person name="Sakaki Y."/>
            <person name="Sakurai T."/>
            <person name="Iida K."/>
            <person name="Akiyama K."/>
            <person name="Satou M."/>
            <person name="Toyoda T."/>
            <person name="Konagaya A."/>
            <person name="Carninci P."/>
            <person name="Kawai J."/>
            <person name="Hayashizaki Y."/>
            <person name="Shinozaki K."/>
        </authorList>
    </citation>
    <scope>NUCLEOTIDE SEQUENCE [LARGE SCALE MRNA]</scope>
    <source>
        <strain>cv. Columbia</strain>
    </source>
</reference>
<reference key="6">
    <citation type="submission" date="2002-03" db="EMBL/GenBank/DDBJ databases">
        <title>Full-length cDNA from Arabidopsis thaliana.</title>
        <authorList>
            <person name="Brover V.V."/>
            <person name="Troukhan M.E."/>
            <person name="Alexandrov N.A."/>
            <person name="Lu Y.-P."/>
            <person name="Flavell R.B."/>
            <person name="Feldmann K.A."/>
        </authorList>
    </citation>
    <scope>NUCLEOTIDE SEQUENCE [LARGE SCALE MRNA]</scope>
</reference>
<reference key="7">
    <citation type="journal article" date="2012" name="Mol. Cell. Proteomics">
        <title>Comparative large-scale characterisation of plant vs. mammal proteins reveals similar and idiosyncratic N-alpha acetylation features.</title>
        <authorList>
            <person name="Bienvenut W.V."/>
            <person name="Sumpton D."/>
            <person name="Martinez A."/>
            <person name="Lilla S."/>
            <person name="Espagne C."/>
            <person name="Meinnel T."/>
            <person name="Giglione C."/>
        </authorList>
    </citation>
    <scope>ACETYLATION [LARGE SCALE ANALYSIS] AT ALA-2</scope>
    <scope>CLEAVAGE OF INITIATOR METHIONINE [LARGE SCALE ANALYSIS]</scope>
    <scope>IDENTIFICATION BY MASS SPECTROMETRY [LARGE SCALE ANALYSIS]</scope>
</reference>
<dbReference type="EMBL" id="AF371327">
    <property type="protein sequence ID" value="AAM21312.1"/>
    <property type="molecule type" value="mRNA"/>
</dbReference>
<dbReference type="EMBL" id="AB015469">
    <property type="protein sequence ID" value="BAB11494.1"/>
    <property type="status" value="ALT_SEQ"/>
    <property type="molecule type" value="Genomic_DNA"/>
</dbReference>
<dbReference type="EMBL" id="AB015469">
    <property type="protein sequence ID" value="BAB11495.1"/>
    <property type="status" value="ALT_SEQ"/>
    <property type="molecule type" value="Genomic_DNA"/>
</dbReference>
<dbReference type="EMBL" id="CP002688">
    <property type="protein sequence ID" value="AED97608.1"/>
    <property type="molecule type" value="Genomic_DNA"/>
</dbReference>
<dbReference type="EMBL" id="BT008568">
    <property type="protein sequence ID" value="AAP40395.1"/>
    <property type="molecule type" value="mRNA"/>
</dbReference>
<dbReference type="EMBL" id="BT008688">
    <property type="protein sequence ID" value="AAP40494.1"/>
    <property type="molecule type" value="mRNA"/>
</dbReference>
<dbReference type="EMBL" id="AK175305">
    <property type="protein sequence ID" value="BAD43068.1"/>
    <property type="molecule type" value="mRNA"/>
</dbReference>
<dbReference type="EMBL" id="AK229718">
    <property type="protein sequence ID" value="BAF01556.1"/>
    <property type="molecule type" value="mRNA"/>
</dbReference>
<dbReference type="EMBL" id="AY087852">
    <property type="protein sequence ID" value="AAM65405.1"/>
    <property type="molecule type" value="mRNA"/>
</dbReference>
<dbReference type="RefSeq" id="NP_201050.2">
    <property type="nucleotide sequence ID" value="NM_125638.6"/>
</dbReference>
<dbReference type="SMR" id="Q8L557"/>
<dbReference type="FunCoup" id="Q8L557">
    <property type="interactions" value="149"/>
</dbReference>
<dbReference type="IntAct" id="Q8L557">
    <property type="interactions" value="1"/>
</dbReference>
<dbReference type="STRING" id="3702.Q8L557"/>
<dbReference type="iPTMnet" id="Q8L557"/>
<dbReference type="PaxDb" id="3702-AT5G62440.1"/>
<dbReference type="ProteomicsDB" id="222323"/>
<dbReference type="EnsemblPlants" id="AT5G62440.1">
    <property type="protein sequence ID" value="AT5G62440.1"/>
    <property type="gene ID" value="AT5G62440"/>
</dbReference>
<dbReference type="GeneID" id="836365"/>
<dbReference type="Gramene" id="AT5G62440.1">
    <property type="protein sequence ID" value="AT5G62440.1"/>
    <property type="gene ID" value="AT5G62440"/>
</dbReference>
<dbReference type="KEGG" id="ath:AT5G62440"/>
<dbReference type="Araport" id="AT5G62440"/>
<dbReference type="TAIR" id="AT5G62440">
    <property type="gene designation" value="DOM1"/>
</dbReference>
<dbReference type="eggNOG" id="ENOG502RXTW">
    <property type="taxonomic scope" value="Eukaryota"/>
</dbReference>
<dbReference type="HOGENOM" id="CLU_069921_0_0_1"/>
<dbReference type="InParanoid" id="Q8L557"/>
<dbReference type="OMA" id="NTSVEMF"/>
<dbReference type="OrthoDB" id="409625at2759"/>
<dbReference type="PhylomeDB" id="Q8L557"/>
<dbReference type="PRO" id="PR:Q8L557"/>
<dbReference type="Proteomes" id="UP000006548">
    <property type="component" value="Chromosome 5"/>
</dbReference>
<dbReference type="ExpressionAtlas" id="Q8L557">
    <property type="expression patterns" value="baseline and differential"/>
</dbReference>
<dbReference type="GO" id="GO:0005634">
    <property type="term" value="C:nucleus"/>
    <property type="evidence" value="ECO:0000314"/>
    <property type="project" value="TAIR"/>
</dbReference>
<dbReference type="GO" id="GO:0009793">
    <property type="term" value="P:embryo development ending in seed dormancy"/>
    <property type="evidence" value="ECO:0000315"/>
    <property type="project" value="TAIR"/>
</dbReference>
<dbReference type="GO" id="GO:0017126">
    <property type="term" value="P:nucleologenesis"/>
    <property type="evidence" value="ECO:0000315"/>
    <property type="project" value="TAIR"/>
</dbReference>
<dbReference type="GO" id="GO:0051302">
    <property type="term" value="P:regulation of cell division"/>
    <property type="evidence" value="ECO:0000315"/>
    <property type="project" value="TAIR"/>
</dbReference>
<dbReference type="FunFam" id="3.10.450.40:FF:000016">
    <property type="entry name" value="Predicted protein"/>
    <property type="match status" value="1"/>
</dbReference>
<dbReference type="Gene3D" id="3.10.450.40">
    <property type="match status" value="1"/>
</dbReference>
<dbReference type="InterPro" id="IPR044673">
    <property type="entry name" value="DCL-like"/>
</dbReference>
<dbReference type="PANTHER" id="PTHR33415">
    <property type="entry name" value="PROTEIN EMBRYO DEFECTIVE 514"/>
    <property type="match status" value="1"/>
</dbReference>
<dbReference type="PANTHER" id="PTHR33415:SF12">
    <property type="entry name" value="PROTEIN EMBRYO DEFECTIVE 514"/>
    <property type="match status" value="1"/>
</dbReference>
<dbReference type="Pfam" id="PF11523">
    <property type="entry name" value="DUF3223"/>
    <property type="match status" value="1"/>
</dbReference>
<organism>
    <name type="scientific">Arabidopsis thaliana</name>
    <name type="common">Mouse-ear cress</name>
    <dbReference type="NCBI Taxonomy" id="3702"/>
    <lineage>
        <taxon>Eukaryota</taxon>
        <taxon>Viridiplantae</taxon>
        <taxon>Streptophyta</taxon>
        <taxon>Embryophyta</taxon>
        <taxon>Tracheophyta</taxon>
        <taxon>Spermatophyta</taxon>
        <taxon>Magnoliopsida</taxon>
        <taxon>eudicotyledons</taxon>
        <taxon>Gunneridae</taxon>
        <taxon>Pentapetalae</taxon>
        <taxon>rosids</taxon>
        <taxon>malvids</taxon>
        <taxon>Brassicales</taxon>
        <taxon>Brassicaceae</taxon>
        <taxon>Camelineae</taxon>
        <taxon>Arabidopsis</taxon>
    </lineage>
</organism>
<gene>
    <name evidence="3" type="primary">EMB514</name>
    <name evidence="3" type="synonym">DOM1</name>
    <name evidence="5" type="ordered locus">At5g62440</name>
    <name evidence="6" type="ORF">K19B1.5</name>
    <name evidence="7" type="ORF">K19B1.6</name>
</gene>